<sequence length="242" mass="24942">MSEWLFDLGNSRFKYAPLHGNRAGQVQAWAHGAEAMDAAALAALPSGRIAYVASVAAPALTQPMIACLQERFTQVRIVRTTAECAGVRIAYADPSRFGVDRFLALLGARGDAPVLVAGVGTALTIDVLGADGLHHGGRIAASPTTMREALHARAVQLPASGGDYVELAIDTDDALTSGCDGAAVALIERSLQHAQRSLGVPVRLLVHGGGAPPLLPLLPDASFRAALVLDGLATWATAAASP</sequence>
<evidence type="ECO:0000255" key="1">
    <source>
        <dbReference type="HAMAP-Rule" id="MF_01274"/>
    </source>
</evidence>
<reference key="1">
    <citation type="journal article" date="2005" name="J. Bacteriol.">
        <title>Insights into genome plasticity and pathogenicity of the plant pathogenic Bacterium Xanthomonas campestris pv. vesicatoria revealed by the complete genome sequence.</title>
        <authorList>
            <person name="Thieme F."/>
            <person name="Koebnik R."/>
            <person name="Bekel T."/>
            <person name="Berger C."/>
            <person name="Boch J."/>
            <person name="Buettner D."/>
            <person name="Caldana C."/>
            <person name="Gaigalat L."/>
            <person name="Goesmann A."/>
            <person name="Kay S."/>
            <person name="Kirchner O."/>
            <person name="Lanz C."/>
            <person name="Linke B."/>
            <person name="McHardy A.C."/>
            <person name="Meyer F."/>
            <person name="Mittenhuber G."/>
            <person name="Nies D.H."/>
            <person name="Niesbach-Kloesgen U."/>
            <person name="Patschkowski T."/>
            <person name="Rueckert C."/>
            <person name="Rupp O."/>
            <person name="Schneiker S."/>
            <person name="Schuster S.C."/>
            <person name="Vorhoelter F.J."/>
            <person name="Weber E."/>
            <person name="Puehler A."/>
            <person name="Bonas U."/>
            <person name="Bartels D."/>
            <person name="Kaiser O."/>
        </authorList>
    </citation>
    <scope>NUCLEOTIDE SEQUENCE [LARGE SCALE GENOMIC DNA]</scope>
    <source>
        <strain>85-10</strain>
    </source>
</reference>
<comment type="function">
    <text evidence="1">Catalyzes the phosphorylation of pantothenate (Pan), the first step in CoA biosynthesis.</text>
</comment>
<comment type="catalytic activity">
    <reaction evidence="1">
        <text>(R)-pantothenate + ATP = (R)-4'-phosphopantothenate + ADP + H(+)</text>
        <dbReference type="Rhea" id="RHEA:16373"/>
        <dbReference type="ChEBI" id="CHEBI:10986"/>
        <dbReference type="ChEBI" id="CHEBI:15378"/>
        <dbReference type="ChEBI" id="CHEBI:29032"/>
        <dbReference type="ChEBI" id="CHEBI:30616"/>
        <dbReference type="ChEBI" id="CHEBI:456216"/>
        <dbReference type="EC" id="2.7.1.33"/>
    </reaction>
</comment>
<comment type="cofactor">
    <cofactor evidence="1">
        <name>NH4(+)</name>
        <dbReference type="ChEBI" id="CHEBI:28938"/>
    </cofactor>
    <cofactor evidence="1">
        <name>K(+)</name>
        <dbReference type="ChEBI" id="CHEBI:29103"/>
    </cofactor>
    <text evidence="1">A monovalent cation. Ammonium or potassium.</text>
</comment>
<comment type="pathway">
    <text evidence="1">Cofactor biosynthesis; coenzyme A biosynthesis; CoA from (R)-pantothenate: step 1/5.</text>
</comment>
<comment type="subunit">
    <text evidence="1">Homodimer.</text>
</comment>
<comment type="subcellular location">
    <subcellularLocation>
        <location evidence="1">Cytoplasm</location>
    </subcellularLocation>
</comment>
<comment type="similarity">
    <text evidence="1">Belongs to the type III pantothenate kinase family.</text>
</comment>
<keyword id="KW-0067">ATP-binding</keyword>
<keyword id="KW-0173">Coenzyme A biosynthesis</keyword>
<keyword id="KW-0963">Cytoplasm</keyword>
<keyword id="KW-0418">Kinase</keyword>
<keyword id="KW-0547">Nucleotide-binding</keyword>
<keyword id="KW-0630">Potassium</keyword>
<keyword id="KW-0808">Transferase</keyword>
<name>COAX_XANE5</name>
<organism>
    <name type="scientific">Xanthomonas euvesicatoria pv. vesicatoria (strain 85-10)</name>
    <name type="common">Xanthomonas campestris pv. vesicatoria</name>
    <dbReference type="NCBI Taxonomy" id="316273"/>
    <lineage>
        <taxon>Bacteria</taxon>
        <taxon>Pseudomonadati</taxon>
        <taxon>Pseudomonadota</taxon>
        <taxon>Gammaproteobacteria</taxon>
        <taxon>Lysobacterales</taxon>
        <taxon>Lysobacteraceae</taxon>
        <taxon>Xanthomonas</taxon>
    </lineage>
</organism>
<gene>
    <name evidence="1" type="primary">coaX</name>
    <name type="ordered locus">XCV4109</name>
</gene>
<feature type="chain" id="PRO_0000270911" description="Type III pantothenate kinase">
    <location>
        <begin position="1"/>
        <end position="242"/>
    </location>
</feature>
<feature type="active site" description="Proton acceptor" evidence="1">
    <location>
        <position position="100"/>
    </location>
</feature>
<feature type="binding site" evidence="1">
    <location>
        <begin position="7"/>
        <end position="14"/>
    </location>
    <ligand>
        <name>ATP</name>
        <dbReference type="ChEBI" id="CHEBI:30616"/>
    </ligand>
</feature>
<feature type="binding site" evidence="1">
    <location>
        <position position="91"/>
    </location>
    <ligand>
        <name>substrate</name>
    </ligand>
</feature>
<feature type="binding site" evidence="1">
    <location>
        <begin position="98"/>
        <end position="101"/>
    </location>
    <ligand>
        <name>substrate</name>
    </ligand>
</feature>
<feature type="binding site" evidence="1">
    <location>
        <position position="121"/>
    </location>
    <ligand>
        <name>ATP</name>
        <dbReference type="ChEBI" id="CHEBI:30616"/>
    </ligand>
</feature>
<feature type="binding site" evidence="1">
    <location>
        <position position="171"/>
    </location>
    <ligand>
        <name>substrate</name>
    </ligand>
</feature>
<dbReference type="EC" id="2.7.1.33" evidence="1"/>
<dbReference type="EMBL" id="AM039952">
    <property type="protein sequence ID" value="CAJ25840.1"/>
    <property type="molecule type" value="Genomic_DNA"/>
</dbReference>
<dbReference type="RefSeq" id="WP_011348917.1">
    <property type="nucleotide sequence ID" value="NZ_CP017190.1"/>
</dbReference>
<dbReference type="SMR" id="Q3BN23"/>
<dbReference type="STRING" id="456327.BJD11_24885"/>
<dbReference type="KEGG" id="xcv:XCV4109"/>
<dbReference type="eggNOG" id="COG1521">
    <property type="taxonomic scope" value="Bacteria"/>
</dbReference>
<dbReference type="HOGENOM" id="CLU_066627_0_0_6"/>
<dbReference type="UniPathway" id="UPA00241">
    <property type="reaction ID" value="UER00352"/>
</dbReference>
<dbReference type="Proteomes" id="UP000007069">
    <property type="component" value="Chromosome"/>
</dbReference>
<dbReference type="GO" id="GO:0005737">
    <property type="term" value="C:cytoplasm"/>
    <property type="evidence" value="ECO:0007669"/>
    <property type="project" value="UniProtKB-SubCell"/>
</dbReference>
<dbReference type="GO" id="GO:0005524">
    <property type="term" value="F:ATP binding"/>
    <property type="evidence" value="ECO:0007669"/>
    <property type="project" value="UniProtKB-UniRule"/>
</dbReference>
<dbReference type="GO" id="GO:0004594">
    <property type="term" value="F:pantothenate kinase activity"/>
    <property type="evidence" value="ECO:0007669"/>
    <property type="project" value="UniProtKB-UniRule"/>
</dbReference>
<dbReference type="GO" id="GO:0015937">
    <property type="term" value="P:coenzyme A biosynthetic process"/>
    <property type="evidence" value="ECO:0007669"/>
    <property type="project" value="UniProtKB-UniRule"/>
</dbReference>
<dbReference type="CDD" id="cd24015">
    <property type="entry name" value="ASKHA_NBD_PanK-III"/>
    <property type="match status" value="1"/>
</dbReference>
<dbReference type="Gene3D" id="3.30.420.40">
    <property type="match status" value="2"/>
</dbReference>
<dbReference type="HAMAP" id="MF_01274">
    <property type="entry name" value="Pantothen_kinase_3"/>
    <property type="match status" value="1"/>
</dbReference>
<dbReference type="InterPro" id="IPR043129">
    <property type="entry name" value="ATPase_NBD"/>
</dbReference>
<dbReference type="InterPro" id="IPR004619">
    <property type="entry name" value="Type_III_PanK"/>
</dbReference>
<dbReference type="NCBIfam" id="TIGR00671">
    <property type="entry name" value="baf"/>
    <property type="match status" value="1"/>
</dbReference>
<dbReference type="NCBIfam" id="NF009864">
    <property type="entry name" value="PRK13327.1"/>
    <property type="match status" value="1"/>
</dbReference>
<dbReference type="PANTHER" id="PTHR34265">
    <property type="entry name" value="TYPE III PANTOTHENATE KINASE"/>
    <property type="match status" value="1"/>
</dbReference>
<dbReference type="PANTHER" id="PTHR34265:SF1">
    <property type="entry name" value="TYPE III PANTOTHENATE KINASE"/>
    <property type="match status" value="1"/>
</dbReference>
<dbReference type="Pfam" id="PF03309">
    <property type="entry name" value="Pan_kinase"/>
    <property type="match status" value="1"/>
</dbReference>
<dbReference type="SUPFAM" id="SSF53067">
    <property type="entry name" value="Actin-like ATPase domain"/>
    <property type="match status" value="2"/>
</dbReference>
<accession>Q3BN23</accession>
<protein>
    <recommendedName>
        <fullName evidence="1">Type III pantothenate kinase</fullName>
        <ecNumber evidence="1">2.7.1.33</ecNumber>
    </recommendedName>
    <alternativeName>
        <fullName evidence="1">PanK-III</fullName>
    </alternativeName>
    <alternativeName>
        <fullName evidence="1">Pantothenic acid kinase</fullName>
    </alternativeName>
</protein>
<proteinExistence type="inferred from homology"/>